<proteinExistence type="evidence at transcript level"/>
<sequence>MIQVLLVTICLAAFPYQGSSIMLESGKVNDYEVVYPQRLAPLPEGAVQQKYEDTMQYEFKVNGETIVLHLEKNKGLFSKDYSETHYSPDGRKITTYPSVEDHCYYHGRIENYEDSTASISACNGLKGHFKIQGETYFIESLKLSDSEAHAVFKYENVEKEDETHKICGVTQNWKSYDPIKKPSWLNLTPKQQTWPQTSVNLQLIVDHSMYAKYNSNSEKITKTLQERVNIMKEIFKPLNLDITLSGIEMWDKKDLITVKTAATDTLKLFAKWRQTDLLKRIDNDNAQLQTAVDFDGETVGLAFKSTMCDKRYSAGIIQDHSAIPLLMAVTMAHELGHNLGMDHDDTSKCNCNVCIMAPRLNTNPSKTFSDCSNNDYQKFLTDKKPKCIHKKSLKTDTVSTSVSGNEPLDDNVDGFHA</sequence>
<name>VM11_DEIAC</name>
<accession>Q9W7S2</accession>
<evidence type="ECO:0000250" key="1"/>
<evidence type="ECO:0000250" key="2">
    <source>
        <dbReference type="UniProtKB" id="P60244"/>
    </source>
</evidence>
<evidence type="ECO:0000250" key="3">
    <source>
        <dbReference type="UniProtKB" id="Q9PW36"/>
    </source>
</evidence>
<evidence type="ECO:0000255" key="4"/>
<evidence type="ECO:0000255" key="5">
    <source>
        <dbReference type="PROSITE-ProRule" id="PRU00276"/>
    </source>
</evidence>
<evidence type="ECO:0000255" key="6">
    <source>
        <dbReference type="PROSITE-ProRule" id="PRU10095"/>
    </source>
</evidence>
<evidence type="ECO:0000256" key="7">
    <source>
        <dbReference type="SAM" id="MobiDB-lite"/>
    </source>
</evidence>
<evidence type="ECO:0000269" key="8">
    <source ref="1"/>
</evidence>
<evidence type="ECO:0000305" key="9"/>
<evidence type="ECO:0000312" key="10">
    <source>
        <dbReference type="EMBL" id="CAB46429.1"/>
    </source>
</evidence>
<reference evidence="10" key="1">
    <citation type="submission" date="1998-01" db="EMBL/GenBank/DDBJ databases">
        <title>Cloning and sequence analysis the cDNA of aculysin1 from Agkistrodon acutus.</title>
        <authorList>
            <person name="Fan C.Y."/>
            <person name="Qian Y.C."/>
            <person name="Gong Y."/>
            <person name="Yang S.L."/>
        </authorList>
    </citation>
    <scope>NUCLEOTIDE SEQUENCE [MRNA]</scope>
    <source>
        <tissue evidence="8">Venom gland</tissue>
    </source>
</reference>
<dbReference type="EC" id="3.4.24.-"/>
<dbReference type="EMBL" id="AJ223284">
    <property type="protein sequence ID" value="CAB46429.1"/>
    <property type="molecule type" value="mRNA"/>
</dbReference>
<dbReference type="SMR" id="Q9W7S2"/>
<dbReference type="MEROPS" id="M12.337"/>
<dbReference type="GO" id="GO:0005576">
    <property type="term" value="C:extracellular region"/>
    <property type="evidence" value="ECO:0000250"/>
    <property type="project" value="UniProtKB"/>
</dbReference>
<dbReference type="GO" id="GO:0005886">
    <property type="term" value="C:plasma membrane"/>
    <property type="evidence" value="ECO:0007669"/>
    <property type="project" value="TreeGrafter"/>
</dbReference>
<dbReference type="GO" id="GO:0005509">
    <property type="term" value="F:calcium ion binding"/>
    <property type="evidence" value="ECO:0000250"/>
    <property type="project" value="UniProtKB"/>
</dbReference>
<dbReference type="GO" id="GO:0004222">
    <property type="term" value="F:metalloendopeptidase activity"/>
    <property type="evidence" value="ECO:0007669"/>
    <property type="project" value="InterPro"/>
</dbReference>
<dbReference type="GO" id="GO:0090729">
    <property type="term" value="F:toxin activity"/>
    <property type="evidence" value="ECO:0007669"/>
    <property type="project" value="UniProtKB-KW"/>
</dbReference>
<dbReference type="GO" id="GO:0008270">
    <property type="term" value="F:zinc ion binding"/>
    <property type="evidence" value="ECO:0000250"/>
    <property type="project" value="UniProtKB"/>
</dbReference>
<dbReference type="GO" id="GO:0006508">
    <property type="term" value="P:proteolysis"/>
    <property type="evidence" value="ECO:0007669"/>
    <property type="project" value="UniProtKB-KW"/>
</dbReference>
<dbReference type="CDD" id="cd04269">
    <property type="entry name" value="ZnMc_adamalysin_II_like"/>
    <property type="match status" value="1"/>
</dbReference>
<dbReference type="FunFam" id="3.40.390.10:FF:000002">
    <property type="entry name" value="Disintegrin and metalloproteinase domain-containing protein 22"/>
    <property type="match status" value="1"/>
</dbReference>
<dbReference type="Gene3D" id="3.40.390.10">
    <property type="entry name" value="Collagenase (Catalytic Domain)"/>
    <property type="match status" value="1"/>
</dbReference>
<dbReference type="InterPro" id="IPR024079">
    <property type="entry name" value="MetalloPept_cat_dom_sf"/>
</dbReference>
<dbReference type="InterPro" id="IPR001590">
    <property type="entry name" value="Peptidase_M12B"/>
</dbReference>
<dbReference type="InterPro" id="IPR002870">
    <property type="entry name" value="Peptidase_M12B_N"/>
</dbReference>
<dbReference type="InterPro" id="IPR034027">
    <property type="entry name" value="Reprolysin_adamalysin"/>
</dbReference>
<dbReference type="PANTHER" id="PTHR11905">
    <property type="entry name" value="ADAM A DISINTEGRIN AND METALLOPROTEASE DOMAIN"/>
    <property type="match status" value="1"/>
</dbReference>
<dbReference type="PANTHER" id="PTHR11905:SF32">
    <property type="entry name" value="DISINTEGRIN AND METALLOPROTEINASE DOMAIN-CONTAINING PROTEIN 28"/>
    <property type="match status" value="1"/>
</dbReference>
<dbReference type="Pfam" id="PF01562">
    <property type="entry name" value="Pep_M12B_propep"/>
    <property type="match status" value="1"/>
</dbReference>
<dbReference type="Pfam" id="PF01421">
    <property type="entry name" value="Reprolysin"/>
    <property type="match status" value="1"/>
</dbReference>
<dbReference type="SUPFAM" id="SSF55486">
    <property type="entry name" value="Metalloproteases ('zincins'), catalytic domain"/>
    <property type="match status" value="1"/>
</dbReference>
<dbReference type="PROSITE" id="PS50215">
    <property type="entry name" value="ADAM_MEPRO"/>
    <property type="match status" value="1"/>
</dbReference>
<dbReference type="PROSITE" id="PS00142">
    <property type="entry name" value="ZINC_PROTEASE"/>
    <property type="match status" value="1"/>
</dbReference>
<organism>
    <name type="scientific">Deinagkistrodon acutus</name>
    <name type="common">Hundred-pace snake</name>
    <name type="synonym">Agkistrodon acutus</name>
    <dbReference type="NCBI Taxonomy" id="36307"/>
    <lineage>
        <taxon>Eukaryota</taxon>
        <taxon>Metazoa</taxon>
        <taxon>Chordata</taxon>
        <taxon>Craniata</taxon>
        <taxon>Vertebrata</taxon>
        <taxon>Euteleostomi</taxon>
        <taxon>Lepidosauria</taxon>
        <taxon>Squamata</taxon>
        <taxon>Bifurcata</taxon>
        <taxon>Unidentata</taxon>
        <taxon>Episquamata</taxon>
        <taxon>Toxicofera</taxon>
        <taxon>Serpentes</taxon>
        <taxon>Colubroidea</taxon>
        <taxon>Viperidae</taxon>
        <taxon>Crotalinae</taxon>
        <taxon>Deinagkistrodon</taxon>
    </lineage>
</organism>
<protein>
    <recommendedName>
        <fullName>Snake venom metalloproteinase aculysin-1</fullName>
        <shortName>SVMP</shortName>
        <ecNumber>3.4.24.-</ecNumber>
    </recommendedName>
</protein>
<gene>
    <name evidence="10" type="primary">wbfib</name>
</gene>
<feature type="signal peptide" evidence="4">
    <location>
        <begin position="1"/>
        <end position="20"/>
    </location>
</feature>
<feature type="propeptide" id="PRO_0000235849" evidence="1">
    <location>
        <begin position="21"/>
        <end position="189"/>
    </location>
</feature>
<feature type="chain" id="PRO_0000235850" description="Snake venom metalloproteinase aculysin-1">
    <location>
        <begin position="190"/>
        <end position="392"/>
    </location>
</feature>
<feature type="propeptide" id="PRO_0000235851" evidence="3">
    <location>
        <begin position="393"/>
        <end position="417"/>
    </location>
</feature>
<feature type="domain" description="Peptidase M12B" evidence="5">
    <location>
        <begin position="197"/>
        <end position="392"/>
    </location>
</feature>
<feature type="region of interest" description="Disordered" evidence="7">
    <location>
        <begin position="398"/>
        <end position="417"/>
    </location>
</feature>
<feature type="compositionally biased region" description="Acidic residues" evidence="7">
    <location>
        <begin position="407"/>
        <end position="417"/>
    </location>
</feature>
<feature type="active site" evidence="2 5 6">
    <location>
        <position position="334"/>
    </location>
</feature>
<feature type="binding site" evidence="1">
    <location>
        <position position="333"/>
    </location>
    <ligand>
        <name>Zn(2+)</name>
        <dbReference type="ChEBI" id="CHEBI:29105"/>
        <note>catalytic</note>
    </ligand>
</feature>
<feature type="binding site" evidence="1">
    <location>
        <position position="337"/>
    </location>
    <ligand>
        <name>Zn(2+)</name>
        <dbReference type="ChEBI" id="CHEBI:29105"/>
        <note>catalytic</note>
    </ligand>
</feature>
<feature type="binding site" evidence="1">
    <location>
        <position position="343"/>
    </location>
    <ligand>
        <name>Zn(2+)</name>
        <dbReference type="ChEBI" id="CHEBI:29105"/>
        <note>catalytic</note>
    </ligand>
</feature>
<feature type="disulfide bond" evidence="2 5">
    <location>
        <begin position="308"/>
        <end position="387"/>
    </location>
</feature>
<feature type="disulfide bond" evidence="2 5">
    <location>
        <begin position="349"/>
        <end position="371"/>
    </location>
</feature>
<feature type="disulfide bond" evidence="2 5">
    <location>
        <begin position="351"/>
        <end position="354"/>
    </location>
</feature>
<keyword id="KW-1015">Disulfide bond</keyword>
<keyword id="KW-1200">Hemorrhagic toxin</keyword>
<keyword id="KW-1199">Hemostasis impairing toxin</keyword>
<keyword id="KW-0378">Hydrolase</keyword>
<keyword id="KW-0479">Metal-binding</keyword>
<keyword id="KW-0482">Metalloprotease</keyword>
<keyword id="KW-0645">Protease</keyword>
<keyword id="KW-0964">Secreted</keyword>
<keyword id="KW-0732">Signal</keyword>
<keyword id="KW-0800">Toxin</keyword>
<keyword id="KW-0862">Zinc</keyword>
<keyword id="KW-0865">Zymogen</keyword>
<comment type="function">
    <text evidence="2">This protein is an alkaline zinc metalloprotease from snake venom that possesses weak hemorrhagic activity.</text>
</comment>
<comment type="cofactor">
    <cofactor evidence="2">
        <name>Zn(2+)</name>
        <dbReference type="ChEBI" id="CHEBI:29105"/>
    </cofactor>
    <text evidence="2">Binds 1 zinc ion per subunit.</text>
</comment>
<comment type="subunit">
    <text evidence="2">Monomer.</text>
</comment>
<comment type="subcellular location">
    <subcellularLocation>
        <location evidence="1">Secreted</location>
    </subcellularLocation>
</comment>
<comment type="tissue specificity">
    <text>Expressed by the venom gland.</text>
</comment>
<comment type="similarity">
    <text evidence="9">Belongs to the venom metalloproteinase (M12B) family. P-I subfamily.</text>
</comment>